<organism>
    <name type="scientific">Saccharomyces cerevisiae (strain ATCC 204508 / S288c)</name>
    <name type="common">Baker's yeast</name>
    <dbReference type="NCBI Taxonomy" id="559292"/>
    <lineage>
        <taxon>Eukaryota</taxon>
        <taxon>Fungi</taxon>
        <taxon>Dikarya</taxon>
        <taxon>Ascomycota</taxon>
        <taxon>Saccharomycotina</taxon>
        <taxon>Saccharomycetes</taxon>
        <taxon>Saccharomycetales</taxon>
        <taxon>Saccharomycetaceae</taxon>
        <taxon>Saccharomyces</taxon>
    </lineage>
</organism>
<name>GLT1_YEAST</name>
<feature type="propeptide" id="PRO_0000011612" evidence="7">
    <location>
        <begin position="1"/>
        <end position="53"/>
    </location>
</feature>
<feature type="chain" id="PRO_0000011613" description="Glutamate synthase [NADH]">
    <location>
        <begin position="54"/>
        <end position="2145"/>
    </location>
</feature>
<feature type="domain" description="Glutamine amidotransferase type-2" evidence="3">
    <location>
        <begin position="54"/>
        <end position="455"/>
    </location>
</feature>
<feature type="coiled-coil region" evidence="2">
    <location>
        <begin position="1551"/>
        <end position="1600"/>
    </location>
</feature>
<feature type="active site" description="For GATase activity" evidence="1">
    <location>
        <position position="54"/>
    </location>
</feature>
<feature type="binding site" evidence="1">
    <location>
        <begin position="1132"/>
        <end position="1189"/>
    </location>
    <ligand>
        <name>FMN</name>
        <dbReference type="ChEBI" id="CHEBI:58210"/>
    </ligand>
</feature>
<feature type="binding site" evidence="1">
    <location>
        <position position="1185"/>
    </location>
    <ligand>
        <name>[3Fe-4S] cluster</name>
        <dbReference type="ChEBI" id="CHEBI:21137"/>
    </ligand>
</feature>
<feature type="binding site" evidence="1">
    <location>
        <position position="1191"/>
    </location>
    <ligand>
        <name>[3Fe-4S] cluster</name>
        <dbReference type="ChEBI" id="CHEBI:21137"/>
    </ligand>
</feature>
<feature type="binding site" evidence="1">
    <location>
        <position position="1196"/>
    </location>
    <ligand>
        <name>[3Fe-4S] cluster</name>
        <dbReference type="ChEBI" id="CHEBI:21137"/>
    </ligand>
</feature>
<feature type="binding site" evidence="2">
    <location>
        <begin position="1928"/>
        <end position="1942"/>
    </location>
    <ligand>
        <name>NAD(+)</name>
        <dbReference type="ChEBI" id="CHEBI:57540"/>
    </ligand>
</feature>
<feature type="modified residue" description="Phosphothreonine" evidence="9">
    <location>
        <position position="2070"/>
    </location>
</feature>
<feature type="sequence conflict" description="In Ref. 1; CAA61505." evidence="8" ref="1">
    <original>NVPVDSTI</original>
    <variation>TSRRFYY</variation>
    <location>
        <begin position="166"/>
        <end position="173"/>
    </location>
</feature>
<feature type="sequence conflict" description="In Ref. 1; CAA61505." evidence="8" ref="1">
    <original>FLV</original>
    <variation>IPS</variation>
    <location>
        <begin position="450"/>
        <end position="452"/>
    </location>
</feature>
<feature type="sequence conflict" description="In Ref. 1; CAA61505." evidence="8" ref="1">
    <original>V</original>
    <variation>L</variation>
    <location>
        <position position="1753"/>
    </location>
</feature>
<evidence type="ECO:0000250" key="1"/>
<evidence type="ECO:0000255" key="2"/>
<evidence type="ECO:0000255" key="3">
    <source>
        <dbReference type="PROSITE-ProRule" id="PRU00609"/>
    </source>
</evidence>
<evidence type="ECO:0000269" key="4">
    <source>
    </source>
</evidence>
<evidence type="ECO:0000269" key="5">
    <source>
    </source>
</evidence>
<evidence type="ECO:0000269" key="6">
    <source>
    </source>
</evidence>
<evidence type="ECO:0000269" key="7">
    <source>
    </source>
</evidence>
<evidence type="ECO:0000305" key="8"/>
<evidence type="ECO:0007744" key="9">
    <source>
    </source>
</evidence>
<comment type="function">
    <text evidence="5 6">Forms L-glutamate from L-glutamine and 2-oxoglutarate. Represents an alternative pathway to L-glutamate dehydrogenase for the biosynthesis of L-glutamate. Participates with glutamine synthetase in ammonia assimilation processes. The enzyme is specific for NADH, L-glutamine and 2-oxoglutarate.</text>
</comment>
<comment type="catalytic activity">
    <reaction evidence="5 6 7">
        <text>2 L-glutamate + NAD(+) = L-glutamine + 2-oxoglutarate + NADH + H(+)</text>
        <dbReference type="Rhea" id="RHEA:13753"/>
        <dbReference type="ChEBI" id="CHEBI:15378"/>
        <dbReference type="ChEBI" id="CHEBI:16810"/>
        <dbReference type="ChEBI" id="CHEBI:29985"/>
        <dbReference type="ChEBI" id="CHEBI:57540"/>
        <dbReference type="ChEBI" id="CHEBI:57945"/>
        <dbReference type="ChEBI" id="CHEBI:58359"/>
        <dbReference type="EC" id="1.4.1.14"/>
    </reaction>
</comment>
<comment type="cofactor">
    <cofactor>
        <name>[3Fe-4S] cluster</name>
        <dbReference type="ChEBI" id="CHEBI:21137"/>
    </cofactor>
    <text>Binds 1 [3Fe-4S] cluster.</text>
</comment>
<comment type="cofactor">
    <cofactor>
        <name>FAD</name>
        <dbReference type="ChEBI" id="CHEBI:57692"/>
    </cofactor>
</comment>
<comment type="cofactor">
    <cofactor>
        <name>FMN</name>
        <dbReference type="ChEBI" id="CHEBI:58210"/>
    </cofactor>
</comment>
<comment type="activity regulation">
    <text evidence="6">Inhibited by homocysteine sulfonamide.</text>
</comment>
<comment type="biophysicochemical properties">
    <kinetics>
        <KM evidence="5 6">280 uM for L-glutamine</KM>
        <KM evidence="5 6">40 uM for 2-oxoglutarate</KM>
        <KM evidence="5 6">7 uM for NADH</KM>
    </kinetics>
    <phDependence>
        <text evidence="5 6">Optimum pH is 7-7.5. Active from pH 6 to 9.</text>
    </phDependence>
</comment>
<comment type="pathway">
    <text>Amino-acid biosynthesis; L-glutamate biosynthesis via GLT pathway; L-glutamate from 2-oxoglutarate and L-glutamine (NAD(+) route): step 1/1.</text>
</comment>
<comment type="pathway">
    <text>Energy metabolism; nitrogen metabolism.</text>
</comment>
<comment type="subunit">
    <text evidence="7">Homotrimer.</text>
</comment>
<comment type="interaction">
    <interactant intactId="EBI-7727">
        <id>Q12680</id>
    </interactant>
    <interactant intactId="EBI-36149">
        <id>Q06146</id>
        <label>YLR257W</label>
    </interactant>
    <organismsDiffer>false</organismsDiffer>
    <experiments>2</experiments>
</comment>
<comment type="miscellaneous">
    <text evidence="4">Present with 18900 molecules/cell in log phase SD medium.</text>
</comment>
<comment type="similarity">
    <text evidence="8">Belongs to the glutamate synthase family.</text>
</comment>
<reference key="1">
    <citation type="journal article" date="1996" name="Yeast">
        <title>Sequence of the GLT1 gene from Saccharomyces cerevisiae reveals the domain structure of yeast glutamate synthase.</title>
        <authorList>
            <person name="Filetici P."/>
            <person name="Martegani M.P."/>
            <person name="Valenzuela L."/>
            <person name="Gonzalez A."/>
            <person name="Ballario P."/>
        </authorList>
    </citation>
    <scope>NUCLEOTIDE SEQUENCE [GENOMIC DNA]</scope>
    <source>
        <strain>ATCC 96744 / CN36</strain>
    </source>
</reference>
<reference key="2">
    <citation type="journal article" date="1997" name="Nature">
        <title>The nucleotide sequence of Saccharomyces cerevisiae chromosome IV.</title>
        <authorList>
            <person name="Jacq C."/>
            <person name="Alt-Moerbe J."/>
            <person name="Andre B."/>
            <person name="Arnold W."/>
            <person name="Bahr A."/>
            <person name="Ballesta J.P.G."/>
            <person name="Bargues M."/>
            <person name="Baron L."/>
            <person name="Becker A."/>
            <person name="Biteau N."/>
            <person name="Bloecker H."/>
            <person name="Blugeon C."/>
            <person name="Boskovic J."/>
            <person name="Brandt P."/>
            <person name="Brueckner M."/>
            <person name="Buitrago M.J."/>
            <person name="Coster F."/>
            <person name="Delaveau T."/>
            <person name="del Rey F."/>
            <person name="Dujon B."/>
            <person name="Eide L.G."/>
            <person name="Garcia-Cantalejo J.M."/>
            <person name="Goffeau A."/>
            <person name="Gomez-Peris A."/>
            <person name="Granotier C."/>
            <person name="Hanemann V."/>
            <person name="Hankeln T."/>
            <person name="Hoheisel J.D."/>
            <person name="Jaeger W."/>
            <person name="Jimenez A."/>
            <person name="Jonniaux J.-L."/>
            <person name="Kraemer C."/>
            <person name="Kuester H."/>
            <person name="Laamanen P."/>
            <person name="Legros Y."/>
            <person name="Louis E.J."/>
            <person name="Moeller-Rieker S."/>
            <person name="Monnet A."/>
            <person name="Moro M."/>
            <person name="Mueller-Auer S."/>
            <person name="Nussbaumer B."/>
            <person name="Paricio N."/>
            <person name="Paulin L."/>
            <person name="Perea J."/>
            <person name="Perez-Alonso M."/>
            <person name="Perez-Ortin J.E."/>
            <person name="Pohl T.M."/>
            <person name="Prydz H."/>
            <person name="Purnelle B."/>
            <person name="Rasmussen S.W."/>
            <person name="Remacha M.A."/>
            <person name="Revuelta J.L."/>
            <person name="Rieger M."/>
            <person name="Salom D."/>
            <person name="Saluz H.P."/>
            <person name="Saiz J.E."/>
            <person name="Saren A.-M."/>
            <person name="Schaefer M."/>
            <person name="Scharfe M."/>
            <person name="Schmidt E.R."/>
            <person name="Schneider C."/>
            <person name="Scholler P."/>
            <person name="Schwarz S."/>
            <person name="Soler-Mira A."/>
            <person name="Urrestarazu L.A."/>
            <person name="Verhasselt P."/>
            <person name="Vissers S."/>
            <person name="Voet M."/>
            <person name="Volckaert G."/>
            <person name="Wagner G."/>
            <person name="Wambutt R."/>
            <person name="Wedler E."/>
            <person name="Wedler H."/>
            <person name="Woelfl S."/>
            <person name="Harris D.E."/>
            <person name="Bowman S."/>
            <person name="Brown D."/>
            <person name="Churcher C.M."/>
            <person name="Connor R."/>
            <person name="Dedman K."/>
            <person name="Gentles S."/>
            <person name="Hamlin N."/>
            <person name="Hunt S."/>
            <person name="Jones L."/>
            <person name="McDonald S."/>
            <person name="Murphy L.D."/>
            <person name="Niblett D."/>
            <person name="Odell C."/>
            <person name="Oliver K."/>
            <person name="Rajandream M.A."/>
            <person name="Richards C."/>
            <person name="Shore L."/>
            <person name="Walsh S.V."/>
            <person name="Barrell B.G."/>
            <person name="Dietrich F.S."/>
            <person name="Mulligan J.T."/>
            <person name="Allen E."/>
            <person name="Araujo R."/>
            <person name="Aviles E."/>
            <person name="Berno A."/>
            <person name="Carpenter J."/>
            <person name="Chen E."/>
            <person name="Cherry J.M."/>
            <person name="Chung E."/>
            <person name="Duncan M."/>
            <person name="Hunicke-Smith S."/>
            <person name="Hyman R.W."/>
            <person name="Komp C."/>
            <person name="Lashkari D."/>
            <person name="Lew H."/>
            <person name="Lin D."/>
            <person name="Mosedale D."/>
            <person name="Nakahara K."/>
            <person name="Namath A."/>
            <person name="Oefner P."/>
            <person name="Oh C."/>
            <person name="Petel F.X."/>
            <person name="Roberts D."/>
            <person name="Schramm S."/>
            <person name="Schroeder M."/>
            <person name="Shogren T."/>
            <person name="Shroff N."/>
            <person name="Winant A."/>
            <person name="Yelton M.A."/>
            <person name="Botstein D."/>
            <person name="Davis R.W."/>
            <person name="Johnston M."/>
            <person name="Andrews S."/>
            <person name="Brinkman R."/>
            <person name="Cooper J."/>
            <person name="Ding H."/>
            <person name="Du Z."/>
            <person name="Favello A."/>
            <person name="Fulton L."/>
            <person name="Gattung S."/>
            <person name="Greco T."/>
            <person name="Hallsworth K."/>
            <person name="Hawkins J."/>
            <person name="Hillier L.W."/>
            <person name="Jier M."/>
            <person name="Johnson D."/>
            <person name="Johnston L."/>
            <person name="Kirsten J."/>
            <person name="Kucaba T."/>
            <person name="Langston Y."/>
            <person name="Latreille P."/>
            <person name="Le T."/>
            <person name="Mardis E."/>
            <person name="Menezes S."/>
            <person name="Miller N."/>
            <person name="Nhan M."/>
            <person name="Pauley A."/>
            <person name="Peluso D."/>
            <person name="Rifkin L."/>
            <person name="Riles L."/>
            <person name="Taich A."/>
            <person name="Trevaskis E."/>
            <person name="Vignati D."/>
            <person name="Wilcox L."/>
            <person name="Wohldman P."/>
            <person name="Vaudin M."/>
            <person name="Wilson R."/>
            <person name="Waterston R."/>
            <person name="Albermann K."/>
            <person name="Hani J."/>
            <person name="Heumann K."/>
            <person name="Kleine K."/>
            <person name="Mewes H.-W."/>
            <person name="Zollner A."/>
            <person name="Zaccaria P."/>
        </authorList>
    </citation>
    <scope>NUCLEOTIDE SEQUENCE [LARGE SCALE GENOMIC DNA]</scope>
    <source>
        <strain>ATCC 204508 / S288c</strain>
    </source>
</reference>
<reference key="3">
    <citation type="journal article" date="2014" name="G3 (Bethesda)">
        <title>The reference genome sequence of Saccharomyces cerevisiae: Then and now.</title>
        <authorList>
            <person name="Engel S.R."/>
            <person name="Dietrich F.S."/>
            <person name="Fisk D.G."/>
            <person name="Binkley G."/>
            <person name="Balakrishnan R."/>
            <person name="Costanzo M.C."/>
            <person name="Dwight S.S."/>
            <person name="Hitz B.C."/>
            <person name="Karra K."/>
            <person name="Nash R.S."/>
            <person name="Weng S."/>
            <person name="Wong E.D."/>
            <person name="Lloyd P."/>
            <person name="Skrzypek M.S."/>
            <person name="Miyasato S.R."/>
            <person name="Simison M."/>
            <person name="Cherry J.M."/>
        </authorList>
    </citation>
    <scope>GENOME REANNOTATION</scope>
    <source>
        <strain>ATCC 204508 / S288c</strain>
    </source>
</reference>
<reference key="4">
    <citation type="journal article" date="1995" name="J. Bacteriol.">
        <title>Saccharomyces cerevisiae has a single glutamate synthase gene coding for a plant-like high-molecular-weight polypeptide.</title>
        <authorList>
            <person name="Cogoni C."/>
            <person name="Valenzuela L."/>
            <person name="Gonzalez-Halphen D."/>
            <person name="Olivera H."/>
            <person name="Macino G."/>
            <person name="Ballario P."/>
            <person name="Gonzalez A."/>
        </authorList>
    </citation>
    <scope>PROTEIN SEQUENCE OF 54-61</scope>
    <scope>SUBUNIT</scope>
    <scope>CATALYTIC ACTIVITY</scope>
    <source>
        <strain>ATCC 96744 / CN36</strain>
    </source>
</reference>
<reference key="5">
    <citation type="journal article" date="1974" name="J. Bacteriol.">
        <title>Glutamate synthase: properties of the reduced nicotinamide adenine dinucleotide-dependent enzyme from Saccharomyces cerevisiae.</title>
        <authorList>
            <person name="Roon R.J."/>
            <person name="Even H.L."/>
            <person name="Larimore F."/>
        </authorList>
    </citation>
    <scope>FUNCTION</scope>
    <scope>BIOPHYSICOCHEMICAL PROPERTIES</scope>
    <scope>SUBSTRATE SPECIFICITY</scope>
    <scope>CATALYTIC ACTIVITY</scope>
</reference>
<reference key="6">
    <citation type="journal article" date="1982" name="J. Biol. Chem.">
        <title>Inhibition of homocysteine sulfonamide of glutamate synthase purified from Saccharomyces cerevisiae.</title>
        <authorList>
            <person name="Masters D.S. Jr."/>
            <person name="Meister A."/>
        </authorList>
    </citation>
    <scope>FUNCTION</scope>
    <scope>BIOPHYSICOCHEMICAL PROPERTIES</scope>
    <scope>SUBSTRATE SPECIFICITY</scope>
    <scope>ACTIVITY REGULATION</scope>
    <scope>CATALYTIC ACTIVITY</scope>
</reference>
<reference key="7">
    <citation type="journal article" date="2003" name="Nature">
        <title>Global analysis of protein expression in yeast.</title>
        <authorList>
            <person name="Ghaemmaghami S."/>
            <person name="Huh W.-K."/>
            <person name="Bower K."/>
            <person name="Howson R.W."/>
            <person name="Belle A."/>
            <person name="Dephoure N."/>
            <person name="O'Shea E.K."/>
            <person name="Weissman J.S."/>
        </authorList>
    </citation>
    <scope>LEVEL OF PROTEIN EXPRESSION [LARGE SCALE ANALYSIS]</scope>
</reference>
<reference key="8">
    <citation type="journal article" date="2009" name="Science">
        <title>Global analysis of Cdk1 substrate phosphorylation sites provides insights into evolution.</title>
        <authorList>
            <person name="Holt L.J."/>
            <person name="Tuch B.B."/>
            <person name="Villen J."/>
            <person name="Johnson A.D."/>
            <person name="Gygi S.P."/>
            <person name="Morgan D.O."/>
        </authorList>
    </citation>
    <scope>PHOSPHORYLATION [LARGE SCALE ANALYSIS] AT THR-2070</scope>
    <scope>IDENTIFICATION BY MASS SPECTROMETRY [LARGE SCALE ANALYSIS]</scope>
</reference>
<dbReference type="EC" id="1.4.1.14" evidence="5 6 7"/>
<dbReference type="EMBL" id="X89221">
    <property type="protein sequence ID" value="CAA61505.1"/>
    <property type="molecule type" value="Genomic_DNA"/>
</dbReference>
<dbReference type="EMBL" id="Z67750">
    <property type="protein sequence ID" value="CAA91574.1"/>
    <property type="molecule type" value="Genomic_DNA"/>
</dbReference>
<dbReference type="EMBL" id="Z74219">
    <property type="protein sequence ID" value="CAA98745.1"/>
    <property type="molecule type" value="Genomic_DNA"/>
</dbReference>
<dbReference type="EMBL" id="BK006938">
    <property type="protein sequence ID" value="DAA11690.1"/>
    <property type="molecule type" value="Genomic_DNA"/>
</dbReference>
<dbReference type="PIR" id="S61041">
    <property type="entry name" value="S61041"/>
</dbReference>
<dbReference type="RefSeq" id="NP_010110.1">
    <property type="nucleotide sequence ID" value="NM_001180231.1"/>
</dbReference>
<dbReference type="SMR" id="Q12680"/>
<dbReference type="BioGRID" id="31894">
    <property type="interactions" value="188"/>
</dbReference>
<dbReference type="DIP" id="DIP-6490N"/>
<dbReference type="FunCoup" id="Q12680">
    <property type="interactions" value="848"/>
</dbReference>
<dbReference type="IntAct" id="Q12680">
    <property type="interactions" value="39"/>
</dbReference>
<dbReference type="MINT" id="Q12680"/>
<dbReference type="STRING" id="4932.YDL171C"/>
<dbReference type="iPTMnet" id="Q12680"/>
<dbReference type="PaxDb" id="4932-YDL171C"/>
<dbReference type="PeptideAtlas" id="Q12680"/>
<dbReference type="EnsemblFungi" id="YDL171C_mRNA">
    <property type="protein sequence ID" value="YDL171C"/>
    <property type="gene ID" value="YDL171C"/>
</dbReference>
<dbReference type="GeneID" id="851383"/>
<dbReference type="KEGG" id="sce:YDL171C"/>
<dbReference type="AGR" id="SGD:S000002330"/>
<dbReference type="SGD" id="S000002330">
    <property type="gene designation" value="GLT1"/>
</dbReference>
<dbReference type="VEuPathDB" id="FungiDB:YDL171C"/>
<dbReference type="eggNOG" id="KOG0399">
    <property type="taxonomic scope" value="Eukaryota"/>
</dbReference>
<dbReference type="GeneTree" id="ENSGT00940000172171"/>
<dbReference type="HOGENOM" id="CLU_000422_8_2_1"/>
<dbReference type="InParanoid" id="Q12680"/>
<dbReference type="OMA" id="WDGPAAM"/>
<dbReference type="OrthoDB" id="4327079at2759"/>
<dbReference type="BioCyc" id="MetaCyc:YDL171C-MONOMER"/>
<dbReference type="BioCyc" id="YEAST:YDL171C-MONOMER"/>
<dbReference type="SABIO-RK" id="Q12680"/>
<dbReference type="UniPathway" id="UPA00045"/>
<dbReference type="UniPathway" id="UPA00634">
    <property type="reaction ID" value="UER00690"/>
</dbReference>
<dbReference type="BioGRID-ORCS" id="851383">
    <property type="hits" value="0 hits in 10 CRISPR screens"/>
</dbReference>
<dbReference type="CD-CODE" id="E03F929F">
    <property type="entry name" value="Stress granule"/>
</dbReference>
<dbReference type="PRO" id="PR:Q12680"/>
<dbReference type="Proteomes" id="UP000002311">
    <property type="component" value="Chromosome IV"/>
</dbReference>
<dbReference type="RNAct" id="Q12680">
    <property type="molecule type" value="protein"/>
</dbReference>
<dbReference type="GO" id="GO:0005739">
    <property type="term" value="C:mitochondrion"/>
    <property type="evidence" value="ECO:0007005"/>
    <property type="project" value="SGD"/>
</dbReference>
<dbReference type="GO" id="GO:0051538">
    <property type="term" value="F:3 iron, 4 sulfur cluster binding"/>
    <property type="evidence" value="ECO:0007669"/>
    <property type="project" value="UniProtKB-KW"/>
</dbReference>
<dbReference type="GO" id="GO:0050660">
    <property type="term" value="F:flavin adenine dinucleotide binding"/>
    <property type="evidence" value="ECO:0007669"/>
    <property type="project" value="InterPro"/>
</dbReference>
<dbReference type="GO" id="GO:0010181">
    <property type="term" value="F:FMN binding"/>
    <property type="evidence" value="ECO:0007669"/>
    <property type="project" value="InterPro"/>
</dbReference>
<dbReference type="GO" id="GO:0016040">
    <property type="term" value="F:glutamate synthase (NADH) activity"/>
    <property type="evidence" value="ECO:0000314"/>
    <property type="project" value="SGD"/>
</dbReference>
<dbReference type="GO" id="GO:0005506">
    <property type="term" value="F:iron ion binding"/>
    <property type="evidence" value="ECO:0007669"/>
    <property type="project" value="InterPro"/>
</dbReference>
<dbReference type="GO" id="GO:0016639">
    <property type="term" value="F:oxidoreductase activity, acting on the CH-NH2 group of donors, NAD or NADP as acceptor"/>
    <property type="evidence" value="ECO:0007669"/>
    <property type="project" value="InterPro"/>
</dbReference>
<dbReference type="GO" id="GO:0019676">
    <property type="term" value="P:ammonia assimilation cycle"/>
    <property type="evidence" value="ECO:0000270"/>
    <property type="project" value="SGD"/>
</dbReference>
<dbReference type="GO" id="GO:0006537">
    <property type="term" value="P:glutamate biosynthetic process"/>
    <property type="evidence" value="ECO:0000270"/>
    <property type="project" value="SGD"/>
</dbReference>
<dbReference type="GO" id="GO:0097054">
    <property type="term" value="P:L-glutamate biosynthetic process"/>
    <property type="evidence" value="ECO:0007669"/>
    <property type="project" value="UniProtKB-UniPathway"/>
</dbReference>
<dbReference type="CDD" id="cd00982">
    <property type="entry name" value="gltB_C"/>
    <property type="match status" value="1"/>
</dbReference>
<dbReference type="CDD" id="cd00713">
    <property type="entry name" value="GltS"/>
    <property type="match status" value="1"/>
</dbReference>
<dbReference type="CDD" id="cd02808">
    <property type="entry name" value="GltS_FMN"/>
    <property type="match status" value="1"/>
</dbReference>
<dbReference type="FunFam" id="1.10.1060.10:FF:000021">
    <property type="entry name" value="Glutamate synthase"/>
    <property type="match status" value="1"/>
</dbReference>
<dbReference type="FunFam" id="3.50.50.60:FF:000207">
    <property type="entry name" value="Glutamate synthase"/>
    <property type="match status" value="1"/>
</dbReference>
<dbReference type="FunFam" id="3.20.20.70:FF:000031">
    <property type="entry name" value="Glutamate synthase 1 [NADH]"/>
    <property type="match status" value="1"/>
</dbReference>
<dbReference type="FunFam" id="3.20.20.70:FF:000017">
    <property type="entry name" value="Glutamate synthase [NADH], amyloplastic"/>
    <property type="match status" value="1"/>
</dbReference>
<dbReference type="FunFam" id="3.50.50.60:FF:000124">
    <property type="entry name" value="Glutamate synthase small subunit"/>
    <property type="match status" value="1"/>
</dbReference>
<dbReference type="FunFam" id="2.160.20.60:FF:000001">
    <property type="entry name" value="Glutamate synthase, large subunit"/>
    <property type="match status" value="1"/>
</dbReference>
<dbReference type="FunFam" id="3.60.20.10:FF:000001">
    <property type="entry name" value="Glutamate synthase, large subunit"/>
    <property type="match status" value="1"/>
</dbReference>
<dbReference type="Gene3D" id="3.20.20.70">
    <property type="entry name" value="Aldolase class I"/>
    <property type="match status" value="2"/>
</dbReference>
<dbReference type="Gene3D" id="1.10.1060.10">
    <property type="entry name" value="Alpha-helical ferredoxin"/>
    <property type="match status" value="1"/>
</dbReference>
<dbReference type="Gene3D" id="3.50.50.60">
    <property type="entry name" value="FAD/NAD(P)-binding domain"/>
    <property type="match status" value="2"/>
</dbReference>
<dbReference type="Gene3D" id="2.160.20.60">
    <property type="entry name" value="Glutamate synthase, alpha subunit, C-terminal domain"/>
    <property type="match status" value="1"/>
</dbReference>
<dbReference type="Gene3D" id="3.60.20.10">
    <property type="entry name" value="Glutamine Phosphoribosylpyrophosphate, subunit 1, domain 1"/>
    <property type="match status" value="1"/>
</dbReference>
<dbReference type="InterPro" id="IPR013785">
    <property type="entry name" value="Aldolase_TIM"/>
</dbReference>
<dbReference type="InterPro" id="IPR028261">
    <property type="entry name" value="DPD_II"/>
</dbReference>
<dbReference type="InterPro" id="IPR036188">
    <property type="entry name" value="FAD/NAD-bd_sf"/>
</dbReference>
<dbReference type="InterPro" id="IPR023753">
    <property type="entry name" value="FAD/NAD-binding_dom"/>
</dbReference>
<dbReference type="InterPro" id="IPR017932">
    <property type="entry name" value="GATase_2_dom"/>
</dbReference>
<dbReference type="InterPro" id="IPR002489">
    <property type="entry name" value="Glu_synth_asu_C"/>
</dbReference>
<dbReference type="InterPro" id="IPR036485">
    <property type="entry name" value="Glu_synth_asu_C_sf"/>
</dbReference>
<dbReference type="InterPro" id="IPR006982">
    <property type="entry name" value="Glu_synth_centr_N"/>
</dbReference>
<dbReference type="InterPro" id="IPR012220">
    <property type="entry name" value="Glu_synth_euk"/>
</dbReference>
<dbReference type="InterPro" id="IPR002932">
    <property type="entry name" value="Glu_synthdom"/>
</dbReference>
<dbReference type="InterPro" id="IPR006005">
    <property type="entry name" value="Glut_synth_ssu1"/>
</dbReference>
<dbReference type="InterPro" id="IPR051394">
    <property type="entry name" value="Glutamate_Synthase"/>
</dbReference>
<dbReference type="InterPro" id="IPR009051">
    <property type="entry name" value="Helical_ferredxn"/>
</dbReference>
<dbReference type="InterPro" id="IPR029055">
    <property type="entry name" value="Ntn_hydrolases_N"/>
</dbReference>
<dbReference type="NCBIfam" id="TIGR01317">
    <property type="entry name" value="GOGAT_sm_gam"/>
    <property type="match status" value="1"/>
</dbReference>
<dbReference type="NCBIfam" id="NF008730">
    <property type="entry name" value="PRK11750.1"/>
    <property type="match status" value="1"/>
</dbReference>
<dbReference type="PANTHER" id="PTHR43100">
    <property type="entry name" value="GLUTAMATE SYNTHASE [NADPH] SMALL CHAIN"/>
    <property type="match status" value="1"/>
</dbReference>
<dbReference type="PANTHER" id="PTHR43100:SF1">
    <property type="entry name" value="GLUTAMATE SYNTHASE [NADPH] SMALL CHAIN"/>
    <property type="match status" value="1"/>
</dbReference>
<dbReference type="Pfam" id="PF14691">
    <property type="entry name" value="Fer4_20"/>
    <property type="match status" value="1"/>
</dbReference>
<dbReference type="Pfam" id="PF00310">
    <property type="entry name" value="GATase_2"/>
    <property type="match status" value="1"/>
</dbReference>
<dbReference type="Pfam" id="PF04898">
    <property type="entry name" value="Glu_syn_central"/>
    <property type="match status" value="1"/>
</dbReference>
<dbReference type="Pfam" id="PF01645">
    <property type="entry name" value="Glu_synthase"/>
    <property type="match status" value="1"/>
</dbReference>
<dbReference type="Pfam" id="PF01493">
    <property type="entry name" value="GXGXG"/>
    <property type="match status" value="1"/>
</dbReference>
<dbReference type="Pfam" id="PF07992">
    <property type="entry name" value="Pyr_redox_2"/>
    <property type="match status" value="1"/>
</dbReference>
<dbReference type="PIRSF" id="PIRSF000187">
    <property type="entry name" value="GOGAT"/>
    <property type="match status" value="1"/>
</dbReference>
<dbReference type="PRINTS" id="PR00419">
    <property type="entry name" value="ADXRDTASE"/>
</dbReference>
<dbReference type="SUPFAM" id="SSF69336">
    <property type="entry name" value="Alpha subunit of glutamate synthase, C-terminal domain"/>
    <property type="match status" value="1"/>
</dbReference>
<dbReference type="SUPFAM" id="SSF46548">
    <property type="entry name" value="alpha-helical ferredoxin"/>
    <property type="match status" value="1"/>
</dbReference>
<dbReference type="SUPFAM" id="SSF51395">
    <property type="entry name" value="FMN-linked oxidoreductases"/>
    <property type="match status" value="1"/>
</dbReference>
<dbReference type="SUPFAM" id="SSF56235">
    <property type="entry name" value="N-terminal nucleophile aminohydrolases (Ntn hydrolases)"/>
    <property type="match status" value="1"/>
</dbReference>
<dbReference type="SUPFAM" id="SSF51971">
    <property type="entry name" value="Nucleotide-binding domain"/>
    <property type="match status" value="2"/>
</dbReference>
<dbReference type="PROSITE" id="PS51278">
    <property type="entry name" value="GATASE_TYPE_2"/>
    <property type="match status" value="1"/>
</dbReference>
<gene>
    <name type="primary">GLT1</name>
    <name type="ordered locus">YDL171C</name>
</gene>
<sequence length="2145" mass="238102">MPVLKSDNFDPLEEAYEGGTIQNYNDEHHLHKSWANVIPDKRGLYDPDYEHDACGVGFVANKHGEQSHKIVTDARYLLVNMTHRGAVSSDGNGDGAGILLGIPHEFMKREFKLDLDLDIPEMGKYAVGNVFFKKNEKNNKKNLIKCQKIFEDLAASFNLSVLGWRNVPVDSTILGDVALSREPTILQPLLVPLYDEKQPEFNETKFRTQLYLLRKEASLQIGLENWFYVCSLNNTTIVYKGQLTPAQVYNYYPDLTNAHFKSHMALVHSRFSTNTFPSWDRAQPLRWLAHNGEINTLRGNKNWMRSREGVMNSATFKDELDKLYPIIEEGGSDSAALDNVLELLTINGTLSLPEAVMMMVPEAYHKDMDSDLKAWYDWAACLMEPWDGPALLTFTDGRYCGAILDRNGLRPCRYYITSDDRVICASEVGVIPIENSLVVQKGKLKPGDLFLVDTQLGEMVDTKKLKSQISKRQDFKSWLSKVIKLDDLLSKTANLVPKEFISQDSLSLKVQSDPRLLANGYTFEQVTFLLTPMALTGKEALGSMGNDAPLACLNENPVLLYDYFRQLFAQVTNPPIDPIREANVMSLECYVGPQGNLLEMHSSQCDRLLLKSPILHWNEFQALKNIEAAYPSWSVAEIDITFDKSEGLLGYTDTIDKITKLASEAIDDGKKILIITDRKMGANRVSISSLIAISCIHHHLIRNKQRSQVALILETGEAREIHHFCVLLGYGCDGVYPYLAMETLVRMNREGLLRNVNNDNDTLEEGQILENYKHAIDAGILKVMSKMGISTLASYKGAQIFEALGLDNSIVDLCFTGTSSRIRGVTFEYLAQDAFSLHERGYPSRQTISKSVNLPESGEYHFRDGGYKHVNEPTAIASLQDTVRNKNDVSWQLYVKKEMEAIRDCTLRGLLELDFENSVSIPLEQVEPWTEIARRFASGAMSYGSISMEAHSTLAIAMNRLGAKSNCGEGGEDAERSAVQENGDTMRSAIKQVASARFGVTSYYLSDADEIQIKIAQGAKPGEGGELPAHKVSKDIAKTRHSTPNVGLISPPPHHDIYSIEDLKQLIYDLKCANPRAGISVKLVSEVGVGIVASGVAKAKADHILVSGHDGGTGAARWTSVKYAGLPWELGLAETHQTLVLNDLRRNVVVQTDGQLRTGFDIAVAVLLGAESFTLATVPLIAMGCVMLRRCHLNSCAVGIATQDPYLRSKFKGQPEHVINFFYYLIQDLRQIMAKLGFRTIDEMVGHSEKLKKRDDVNAKAINIDLSPILTPAHVIRPGVPTKFTKKQDHKLHTRLDNKLIDEAEVTLDRGLPVNIDASIINTDRALGSTLSYRVSKKFGEDGLPKDTVVVNIEGSAGQSFGAFLASGITFILNGDANDYVGKGLSGGIIVIKPPKDSKFKSDENVIVGNTCFYGATSGTAFISGSAGERFGVRNSGATIVVERIKGNNAFEYMTGGRAIVLSQMESLNAFSGATGGIAYCLTSDYDDFVGKINKDTVELESLCDPVEIAFVKNLIQEHWNYTQSDLAARILGNFNHYLKDFVKVIPTDYKKVLLKEKAEAAKAKAKATSEYLKKFRSNQEVDDEVNTLLIANQKAKEQEKKKSITISNKATLKEPKVVDLEDAVPDSKQLEKNSERIEKTRGFMIHKRRHETHRDPRTRVNDWKEFTNPITKKDAKYQTARCMDCGTPFCLSDTGCPLSNIIPKFNELLFKNQWKLALDKLLETNNFPEFTGRVCPAPCEGACTLGIIEDPVGIKSVERIIIDNAFKEGWIKPCPPSTRTGFTVGVIGSGPAGLACADMLNRAGHTVTVYERSDRCGGLLMYGIPNMKLDKAIVQRRIDLLSAEGIDFVTNTEIGKTISMDELKNKHNAVVYAIGSTIPRDLPIKGRELKNIDFAMQLLESNTKALLNKDLEIIREKIQGKKVIVVGGGDTGNDCLGTSVRHGAASVLNFELLPEPPVERAKDNPWPQWPRVMRVDYGHAEVKEHYGRDPREYCILSKEFIGNDEGEVTAIRTVRVEWKKSQSGVWQMVEIPNSEEIFEADIILLSMGFVGPELINGNDNEVKKTRRGTIATLDDSSYSIDGGKTFACGDCRRGQSLIVWAIQEGRKCAASVDKFLMDGTTYLPSNGGIVQRDYKLLKELASQV</sequence>
<keyword id="KW-0003">3Fe-4S</keyword>
<keyword id="KW-0028">Amino-acid biosynthesis</keyword>
<keyword id="KW-0175">Coiled coil</keyword>
<keyword id="KW-0903">Direct protein sequencing</keyword>
<keyword id="KW-0274">FAD</keyword>
<keyword id="KW-0285">Flavoprotein</keyword>
<keyword id="KW-0288">FMN</keyword>
<keyword id="KW-0314">Glutamate biosynthesis</keyword>
<keyword id="KW-0315">Glutamine amidotransferase</keyword>
<keyword id="KW-0408">Iron</keyword>
<keyword id="KW-0411">Iron-sulfur</keyword>
<keyword id="KW-0479">Metal-binding</keyword>
<keyword id="KW-0520">NAD</keyword>
<keyword id="KW-0560">Oxidoreductase</keyword>
<keyword id="KW-0597">Phosphoprotein</keyword>
<keyword id="KW-1185">Reference proteome</keyword>
<keyword id="KW-0865">Zymogen</keyword>
<accession>Q12680</accession>
<accession>D6VRI0</accession>
<accession>Q12290</accession>
<protein>
    <recommendedName>
        <fullName>Glutamate synthase [NADH]</fullName>
        <ecNumber evidence="5 6 7">1.4.1.14</ecNumber>
    </recommendedName>
    <alternativeName>
        <fullName>NADH-GOGAT</fullName>
    </alternativeName>
</protein>
<proteinExistence type="evidence at protein level"/>